<organism>
    <name type="scientific">Oceanobacillus iheyensis (strain DSM 14371 / CIP 107618 / JCM 11309 / KCTC 3954 / HTE831)</name>
    <dbReference type="NCBI Taxonomy" id="221109"/>
    <lineage>
        <taxon>Bacteria</taxon>
        <taxon>Bacillati</taxon>
        <taxon>Bacillota</taxon>
        <taxon>Bacilli</taxon>
        <taxon>Bacillales</taxon>
        <taxon>Bacillaceae</taxon>
        <taxon>Oceanobacillus</taxon>
    </lineage>
</organism>
<accession>Q8EN13</accession>
<protein>
    <recommendedName>
        <fullName evidence="1">5-oxoprolinase subunit A</fullName>
        <shortName evidence="1">5-OPase subunit A</shortName>
        <ecNumber evidence="1">3.5.2.9</ecNumber>
    </recommendedName>
    <alternativeName>
        <fullName evidence="1">5-oxoprolinase (ATP-hydrolyzing) subunit A</fullName>
    </alternativeName>
</protein>
<evidence type="ECO:0000255" key="1">
    <source>
        <dbReference type="HAMAP-Rule" id="MF_00691"/>
    </source>
</evidence>
<dbReference type="EC" id="3.5.2.9" evidence="1"/>
<dbReference type="EMBL" id="BA000028">
    <property type="protein sequence ID" value="BAC14633.1"/>
    <property type="molecule type" value="Genomic_DNA"/>
</dbReference>
<dbReference type="RefSeq" id="WP_011067071.1">
    <property type="nucleotide sequence ID" value="NC_004193.1"/>
</dbReference>
<dbReference type="SMR" id="Q8EN13"/>
<dbReference type="STRING" id="221109.gene:10734929"/>
<dbReference type="KEGG" id="oih:OB2677"/>
<dbReference type="eggNOG" id="COG1540">
    <property type="taxonomic scope" value="Bacteria"/>
</dbReference>
<dbReference type="HOGENOM" id="CLU_069535_0_0_9"/>
<dbReference type="OrthoDB" id="9773478at2"/>
<dbReference type="PhylomeDB" id="Q8EN13"/>
<dbReference type="Proteomes" id="UP000000822">
    <property type="component" value="Chromosome"/>
</dbReference>
<dbReference type="GO" id="GO:0017168">
    <property type="term" value="F:5-oxoprolinase (ATP-hydrolyzing) activity"/>
    <property type="evidence" value="ECO:0007669"/>
    <property type="project" value="UniProtKB-UniRule"/>
</dbReference>
<dbReference type="GO" id="GO:0005524">
    <property type="term" value="F:ATP binding"/>
    <property type="evidence" value="ECO:0007669"/>
    <property type="project" value="UniProtKB-UniRule"/>
</dbReference>
<dbReference type="GO" id="GO:0005975">
    <property type="term" value="P:carbohydrate metabolic process"/>
    <property type="evidence" value="ECO:0007669"/>
    <property type="project" value="InterPro"/>
</dbReference>
<dbReference type="CDD" id="cd10787">
    <property type="entry name" value="LamB_YcsF_like"/>
    <property type="match status" value="1"/>
</dbReference>
<dbReference type="Gene3D" id="3.20.20.370">
    <property type="entry name" value="Glycoside hydrolase/deacetylase"/>
    <property type="match status" value="1"/>
</dbReference>
<dbReference type="HAMAP" id="MF_00691">
    <property type="entry name" value="PxpA"/>
    <property type="match status" value="1"/>
</dbReference>
<dbReference type="InterPro" id="IPR011330">
    <property type="entry name" value="Glyco_hydro/deAcase_b/a-brl"/>
</dbReference>
<dbReference type="InterPro" id="IPR005501">
    <property type="entry name" value="LamB/YcsF/PxpA-like"/>
</dbReference>
<dbReference type="NCBIfam" id="NF003814">
    <property type="entry name" value="PRK05406.1-3"/>
    <property type="match status" value="1"/>
</dbReference>
<dbReference type="NCBIfam" id="NF003816">
    <property type="entry name" value="PRK05406.1-5"/>
    <property type="match status" value="1"/>
</dbReference>
<dbReference type="PANTHER" id="PTHR30292:SF0">
    <property type="entry name" value="5-OXOPROLINASE SUBUNIT A"/>
    <property type="match status" value="1"/>
</dbReference>
<dbReference type="PANTHER" id="PTHR30292">
    <property type="entry name" value="UNCHARACTERIZED PROTEIN YBGL-RELATED"/>
    <property type="match status" value="1"/>
</dbReference>
<dbReference type="Pfam" id="PF03746">
    <property type="entry name" value="LamB_YcsF"/>
    <property type="match status" value="1"/>
</dbReference>
<dbReference type="SUPFAM" id="SSF88713">
    <property type="entry name" value="Glycoside hydrolase/deacetylase"/>
    <property type="match status" value="1"/>
</dbReference>
<proteinExistence type="inferred from homology"/>
<reference key="1">
    <citation type="journal article" date="2002" name="Nucleic Acids Res.">
        <title>Genome sequence of Oceanobacillus iheyensis isolated from the Iheya Ridge and its unexpected adaptive capabilities to extreme environments.</title>
        <authorList>
            <person name="Takami H."/>
            <person name="Takaki Y."/>
            <person name="Uchiyama I."/>
        </authorList>
    </citation>
    <scope>NUCLEOTIDE SEQUENCE [LARGE SCALE GENOMIC DNA]</scope>
    <source>
        <strain>DSM 14371 / CIP 107618 / JCM 11309 / KCTC 3954 / HTE831</strain>
    </source>
</reference>
<comment type="function">
    <text evidence="1">Catalyzes the cleavage of 5-oxoproline to form L-glutamate coupled to the hydrolysis of ATP to ADP and inorganic phosphate.</text>
</comment>
<comment type="catalytic activity">
    <reaction evidence="1">
        <text>5-oxo-L-proline + ATP + 2 H2O = L-glutamate + ADP + phosphate + H(+)</text>
        <dbReference type="Rhea" id="RHEA:10348"/>
        <dbReference type="ChEBI" id="CHEBI:15377"/>
        <dbReference type="ChEBI" id="CHEBI:15378"/>
        <dbReference type="ChEBI" id="CHEBI:29985"/>
        <dbReference type="ChEBI" id="CHEBI:30616"/>
        <dbReference type="ChEBI" id="CHEBI:43474"/>
        <dbReference type="ChEBI" id="CHEBI:58402"/>
        <dbReference type="ChEBI" id="CHEBI:456216"/>
        <dbReference type="EC" id="3.5.2.9"/>
    </reaction>
</comment>
<comment type="subunit">
    <text evidence="1">Forms a complex composed of PxpA, PxpB and PxpC.</text>
</comment>
<comment type="similarity">
    <text evidence="1">Belongs to the LamB/PxpA family.</text>
</comment>
<name>PXPA_OCEIH</name>
<feature type="chain" id="PRO_0000185022" description="5-oxoprolinase subunit A">
    <location>
        <begin position="1"/>
        <end position="257"/>
    </location>
</feature>
<keyword id="KW-0067">ATP-binding</keyword>
<keyword id="KW-0378">Hydrolase</keyword>
<keyword id="KW-0547">Nucleotide-binding</keyword>
<keyword id="KW-1185">Reference proteome</keyword>
<gene>
    <name evidence="1" type="primary">pxpA</name>
    <name type="ordered locus">OB2677</name>
</gene>
<sequence>MQYQVDLNSDIGESYGAYTIGQDDEVMEFITSANIACGYHAGDHNIIHRTIDLAIKNNVAIGAHPGLQDLIGFGRRPMQISPEEVYQLTVYQIGAVQAFAQVKGHNLYHVKPHGALYNMAAKDTAIAKAIAQAVYDYNPNLILFGLANSELIRMGKEVGLNVANEVFADRTYQPDGSLTPRTSPNAMIHDTDEAVERVIRMVKENKIEAVDGTDISIIADTICIHGDGPKSLEFSRRLSHELKNQGISIQKREMHHG</sequence>